<sequence length="316" mass="34900">MTNFKLKIASRRSKLAMVQTLWVKDQLEKNIPNLEVSIEAMATQGDKILDVALAKIGDKGLFTKELEAQMLVGQADIAVHSLKDLPTNLPSGLKLGCITKREDPADALVVSKKNDCYKLETLPAGSIVGTSSLRRLAQLRNKYPHLNFKDIRGNVITRIEKLDAGEFDCIILAAAGLKRLGFESRIHQIIPNEISLHAVGQGALGIECKSDDKKVLEIISVLEDKPTSQRCLAERAFLRELEGGCQVPIGVNSSIQNEQLYLTGMVASLDGERLIKDQYIGNIDDPEQVGKELAKKLKLQGADKILSEIFEQFREN</sequence>
<dbReference type="EC" id="2.5.1.61" evidence="1"/>
<dbReference type="EMBL" id="CP000111">
    <property type="protein sequence ID" value="ABB49557.1"/>
    <property type="molecule type" value="Genomic_DNA"/>
</dbReference>
<dbReference type="RefSeq" id="WP_011376055.1">
    <property type="nucleotide sequence ID" value="NC_007577.1"/>
</dbReference>
<dbReference type="SMR" id="Q31C38"/>
<dbReference type="STRING" id="74546.PMT9312_0496"/>
<dbReference type="KEGG" id="pmi:PMT9312_0496"/>
<dbReference type="eggNOG" id="COG0181">
    <property type="taxonomic scope" value="Bacteria"/>
</dbReference>
<dbReference type="HOGENOM" id="CLU_019704_0_2_3"/>
<dbReference type="OrthoDB" id="9810298at2"/>
<dbReference type="UniPathway" id="UPA00251">
    <property type="reaction ID" value="UER00319"/>
</dbReference>
<dbReference type="UniPathway" id="UPA00668"/>
<dbReference type="Proteomes" id="UP000002715">
    <property type="component" value="Chromosome"/>
</dbReference>
<dbReference type="GO" id="GO:0005737">
    <property type="term" value="C:cytoplasm"/>
    <property type="evidence" value="ECO:0007669"/>
    <property type="project" value="TreeGrafter"/>
</dbReference>
<dbReference type="GO" id="GO:0004418">
    <property type="term" value="F:hydroxymethylbilane synthase activity"/>
    <property type="evidence" value="ECO:0007669"/>
    <property type="project" value="UniProtKB-UniRule"/>
</dbReference>
<dbReference type="GO" id="GO:0015995">
    <property type="term" value="P:chlorophyll biosynthetic process"/>
    <property type="evidence" value="ECO:0007669"/>
    <property type="project" value="UniProtKB-UniRule"/>
</dbReference>
<dbReference type="GO" id="GO:0006782">
    <property type="term" value="P:protoporphyrinogen IX biosynthetic process"/>
    <property type="evidence" value="ECO:0007669"/>
    <property type="project" value="UniProtKB-UniRule"/>
</dbReference>
<dbReference type="CDD" id="cd13645">
    <property type="entry name" value="PBP2_HuPBGD_like"/>
    <property type="match status" value="1"/>
</dbReference>
<dbReference type="FunFam" id="3.30.160.40:FF:000002">
    <property type="entry name" value="Porphobilinogen deaminase"/>
    <property type="match status" value="1"/>
</dbReference>
<dbReference type="FunFam" id="3.40.190.10:FF:000004">
    <property type="entry name" value="Porphobilinogen deaminase"/>
    <property type="match status" value="1"/>
</dbReference>
<dbReference type="FunFam" id="3.40.190.10:FF:000005">
    <property type="entry name" value="Porphobilinogen deaminase"/>
    <property type="match status" value="1"/>
</dbReference>
<dbReference type="Gene3D" id="3.40.190.10">
    <property type="entry name" value="Periplasmic binding protein-like II"/>
    <property type="match status" value="2"/>
</dbReference>
<dbReference type="Gene3D" id="3.30.160.40">
    <property type="entry name" value="Porphobilinogen deaminase, C-terminal domain"/>
    <property type="match status" value="1"/>
</dbReference>
<dbReference type="HAMAP" id="MF_00260">
    <property type="entry name" value="Porphobil_deam"/>
    <property type="match status" value="1"/>
</dbReference>
<dbReference type="InterPro" id="IPR000860">
    <property type="entry name" value="HemC"/>
</dbReference>
<dbReference type="InterPro" id="IPR022419">
    <property type="entry name" value="Porphobilin_deaminase_cofac_BS"/>
</dbReference>
<dbReference type="InterPro" id="IPR022417">
    <property type="entry name" value="Porphobilin_deaminase_N"/>
</dbReference>
<dbReference type="InterPro" id="IPR022418">
    <property type="entry name" value="Porphobilinogen_deaminase_C"/>
</dbReference>
<dbReference type="InterPro" id="IPR036803">
    <property type="entry name" value="Porphobilinogen_deaminase_C_sf"/>
</dbReference>
<dbReference type="NCBIfam" id="TIGR00212">
    <property type="entry name" value="hemC"/>
    <property type="match status" value="1"/>
</dbReference>
<dbReference type="PANTHER" id="PTHR11557">
    <property type="entry name" value="PORPHOBILINOGEN DEAMINASE"/>
    <property type="match status" value="1"/>
</dbReference>
<dbReference type="PANTHER" id="PTHR11557:SF0">
    <property type="entry name" value="PORPHOBILINOGEN DEAMINASE"/>
    <property type="match status" value="1"/>
</dbReference>
<dbReference type="Pfam" id="PF01379">
    <property type="entry name" value="Porphobil_deam"/>
    <property type="match status" value="1"/>
</dbReference>
<dbReference type="Pfam" id="PF03900">
    <property type="entry name" value="Porphobil_deamC"/>
    <property type="match status" value="1"/>
</dbReference>
<dbReference type="PIRSF" id="PIRSF001438">
    <property type="entry name" value="4pyrrol_synth_OHMeBilane_synth"/>
    <property type="match status" value="1"/>
</dbReference>
<dbReference type="PRINTS" id="PR00151">
    <property type="entry name" value="PORPHBDMNASE"/>
</dbReference>
<dbReference type="SUPFAM" id="SSF53850">
    <property type="entry name" value="Periplasmic binding protein-like II"/>
    <property type="match status" value="1"/>
</dbReference>
<dbReference type="SUPFAM" id="SSF54782">
    <property type="entry name" value="Porphobilinogen deaminase (hydroxymethylbilane synthase), C-terminal domain"/>
    <property type="match status" value="1"/>
</dbReference>
<dbReference type="PROSITE" id="PS00533">
    <property type="entry name" value="PORPHOBILINOGEN_DEAM"/>
    <property type="match status" value="1"/>
</dbReference>
<protein>
    <recommendedName>
        <fullName evidence="1">Porphobilinogen deaminase</fullName>
        <shortName evidence="1">PBG</shortName>
        <ecNumber evidence="1">2.5.1.61</ecNumber>
    </recommendedName>
    <alternativeName>
        <fullName evidence="1">Hydroxymethylbilane synthase</fullName>
        <shortName evidence="1">HMBS</shortName>
    </alternativeName>
    <alternativeName>
        <fullName evidence="1">Pre-uroporphyrinogen synthase</fullName>
    </alternativeName>
</protein>
<comment type="function">
    <text evidence="1">Tetrapolymerization of the monopyrrole PBG into the hydroxymethylbilane pre-uroporphyrinogen in several discrete steps.</text>
</comment>
<comment type="catalytic activity">
    <reaction evidence="1">
        <text>4 porphobilinogen + H2O = hydroxymethylbilane + 4 NH4(+)</text>
        <dbReference type="Rhea" id="RHEA:13185"/>
        <dbReference type="ChEBI" id="CHEBI:15377"/>
        <dbReference type="ChEBI" id="CHEBI:28938"/>
        <dbReference type="ChEBI" id="CHEBI:57845"/>
        <dbReference type="ChEBI" id="CHEBI:58126"/>
        <dbReference type="EC" id="2.5.1.61"/>
    </reaction>
</comment>
<comment type="cofactor">
    <cofactor evidence="1">
        <name>dipyrromethane</name>
        <dbReference type="ChEBI" id="CHEBI:60342"/>
    </cofactor>
    <text evidence="1">Binds 1 dipyrromethane group covalently.</text>
</comment>
<comment type="pathway">
    <text evidence="1">Porphyrin-containing compound metabolism; protoporphyrin-IX biosynthesis; coproporphyrinogen-III from 5-aminolevulinate: step 2/4.</text>
</comment>
<comment type="pathway">
    <text evidence="1">Porphyrin-containing compound metabolism; chlorophyll biosynthesis.</text>
</comment>
<comment type="subunit">
    <text evidence="1">Monomer.</text>
</comment>
<comment type="miscellaneous">
    <text evidence="1">The porphobilinogen subunits are added to the dipyrromethane group.</text>
</comment>
<comment type="similarity">
    <text evidence="1">Belongs to the HMBS family.</text>
</comment>
<reference key="1">
    <citation type="journal article" date="2006" name="Science">
        <title>Genomic islands and the ecology and evolution of Prochlorococcus.</title>
        <authorList>
            <person name="Coleman M.L."/>
            <person name="Sullivan M.B."/>
            <person name="Martiny A.C."/>
            <person name="Steglich C."/>
            <person name="Barry K."/>
            <person name="Delong E.F."/>
            <person name="Chisholm S.W."/>
        </authorList>
    </citation>
    <scope>NUCLEOTIDE SEQUENCE [LARGE SCALE GENOMIC DNA]</scope>
    <source>
        <strain>MIT 9312</strain>
    </source>
</reference>
<evidence type="ECO:0000255" key="1">
    <source>
        <dbReference type="HAMAP-Rule" id="MF_00260"/>
    </source>
</evidence>
<name>HEM3_PROM9</name>
<organism>
    <name type="scientific">Prochlorococcus marinus (strain MIT 9312)</name>
    <dbReference type="NCBI Taxonomy" id="74546"/>
    <lineage>
        <taxon>Bacteria</taxon>
        <taxon>Bacillati</taxon>
        <taxon>Cyanobacteriota</taxon>
        <taxon>Cyanophyceae</taxon>
        <taxon>Synechococcales</taxon>
        <taxon>Prochlorococcaceae</taxon>
        <taxon>Prochlorococcus</taxon>
    </lineage>
</organism>
<gene>
    <name evidence="1" type="primary">hemC</name>
    <name type="ordered locus">PMT9312_0496</name>
</gene>
<keyword id="KW-0149">Chlorophyll biosynthesis</keyword>
<keyword id="KW-0627">Porphyrin biosynthesis</keyword>
<keyword id="KW-0808">Transferase</keyword>
<feature type="chain" id="PRO_0000304261" description="Porphobilinogen deaminase">
    <location>
        <begin position="1"/>
        <end position="316"/>
    </location>
</feature>
<feature type="modified residue" description="S-(dipyrrolylmethanemethyl)cysteine" evidence="1">
    <location>
        <position position="245"/>
    </location>
</feature>
<accession>Q31C38</accession>
<proteinExistence type="inferred from homology"/>